<feature type="chain" id="PRO_1000072901" description="Transcriptional regulator MraZ">
    <location>
        <begin position="1"/>
        <end position="143"/>
    </location>
</feature>
<feature type="domain" description="SpoVT-AbrB 1" evidence="2">
    <location>
        <begin position="5"/>
        <end position="47"/>
    </location>
</feature>
<feature type="domain" description="SpoVT-AbrB 2" evidence="2">
    <location>
        <begin position="76"/>
        <end position="119"/>
    </location>
</feature>
<accession>A8YUN5</accession>
<organism>
    <name type="scientific">Lactobacillus helveticus (strain DPC 4571)</name>
    <dbReference type="NCBI Taxonomy" id="405566"/>
    <lineage>
        <taxon>Bacteria</taxon>
        <taxon>Bacillati</taxon>
        <taxon>Bacillota</taxon>
        <taxon>Bacilli</taxon>
        <taxon>Lactobacillales</taxon>
        <taxon>Lactobacillaceae</taxon>
        <taxon>Lactobacillus</taxon>
    </lineage>
</organism>
<proteinExistence type="inferred from homology"/>
<keyword id="KW-0963">Cytoplasm</keyword>
<keyword id="KW-0238">DNA-binding</keyword>
<keyword id="KW-0677">Repeat</keyword>
<keyword id="KW-0804">Transcription</keyword>
<keyword id="KW-0805">Transcription regulation</keyword>
<gene>
    <name evidence="1" type="primary">mraZ</name>
    <name type="ordered locus">lhv_0850</name>
</gene>
<sequence length="143" mass="16790">MFMGEYHHNLDNKGRLIIPAKLRDQIENKMVFTRGMEGCIFGYSMEEWQKIEAKLAKLPLTKRNTRKFMRLFYSGAMESEFDKQGRVNFTSTLKAHAGLIKECVIIGVSDRIEIWAKERWDSFEEEANEDYDDIAENLDDIEL</sequence>
<dbReference type="EMBL" id="CP000517">
    <property type="protein sequence ID" value="ABX26973.1"/>
    <property type="molecule type" value="Genomic_DNA"/>
</dbReference>
<dbReference type="RefSeq" id="WP_003627673.1">
    <property type="nucleotide sequence ID" value="NC_010080.1"/>
</dbReference>
<dbReference type="SMR" id="A8YUN5"/>
<dbReference type="KEGG" id="lhe:lhv_0850"/>
<dbReference type="eggNOG" id="COG2001">
    <property type="taxonomic scope" value="Bacteria"/>
</dbReference>
<dbReference type="HOGENOM" id="CLU_107907_0_5_9"/>
<dbReference type="Proteomes" id="UP000000790">
    <property type="component" value="Chromosome"/>
</dbReference>
<dbReference type="GO" id="GO:0005737">
    <property type="term" value="C:cytoplasm"/>
    <property type="evidence" value="ECO:0007669"/>
    <property type="project" value="UniProtKB-UniRule"/>
</dbReference>
<dbReference type="GO" id="GO:0009295">
    <property type="term" value="C:nucleoid"/>
    <property type="evidence" value="ECO:0007669"/>
    <property type="project" value="UniProtKB-SubCell"/>
</dbReference>
<dbReference type="GO" id="GO:0003700">
    <property type="term" value="F:DNA-binding transcription factor activity"/>
    <property type="evidence" value="ECO:0007669"/>
    <property type="project" value="UniProtKB-UniRule"/>
</dbReference>
<dbReference type="GO" id="GO:0000976">
    <property type="term" value="F:transcription cis-regulatory region binding"/>
    <property type="evidence" value="ECO:0007669"/>
    <property type="project" value="TreeGrafter"/>
</dbReference>
<dbReference type="GO" id="GO:2000143">
    <property type="term" value="P:negative regulation of DNA-templated transcription initiation"/>
    <property type="evidence" value="ECO:0007669"/>
    <property type="project" value="TreeGrafter"/>
</dbReference>
<dbReference type="CDD" id="cd16321">
    <property type="entry name" value="MraZ_C"/>
    <property type="match status" value="1"/>
</dbReference>
<dbReference type="CDD" id="cd16320">
    <property type="entry name" value="MraZ_N"/>
    <property type="match status" value="1"/>
</dbReference>
<dbReference type="FunFam" id="3.40.1550.20:FF:000002">
    <property type="entry name" value="Transcriptional regulator MraZ"/>
    <property type="match status" value="1"/>
</dbReference>
<dbReference type="Gene3D" id="3.40.1550.20">
    <property type="entry name" value="Transcriptional regulator MraZ domain"/>
    <property type="match status" value="1"/>
</dbReference>
<dbReference type="HAMAP" id="MF_01008">
    <property type="entry name" value="MraZ"/>
    <property type="match status" value="1"/>
</dbReference>
<dbReference type="InterPro" id="IPR003444">
    <property type="entry name" value="MraZ"/>
</dbReference>
<dbReference type="InterPro" id="IPR035644">
    <property type="entry name" value="MraZ_C"/>
</dbReference>
<dbReference type="InterPro" id="IPR020603">
    <property type="entry name" value="MraZ_dom"/>
</dbReference>
<dbReference type="InterPro" id="IPR035642">
    <property type="entry name" value="MraZ_N"/>
</dbReference>
<dbReference type="InterPro" id="IPR038619">
    <property type="entry name" value="MraZ_sf"/>
</dbReference>
<dbReference type="InterPro" id="IPR007159">
    <property type="entry name" value="SpoVT-AbrB_dom"/>
</dbReference>
<dbReference type="InterPro" id="IPR037914">
    <property type="entry name" value="SpoVT-AbrB_sf"/>
</dbReference>
<dbReference type="NCBIfam" id="TIGR00242">
    <property type="entry name" value="division/cell wall cluster transcriptional repressor MraZ"/>
    <property type="match status" value="1"/>
</dbReference>
<dbReference type="PANTHER" id="PTHR34701">
    <property type="entry name" value="TRANSCRIPTIONAL REGULATOR MRAZ"/>
    <property type="match status" value="1"/>
</dbReference>
<dbReference type="PANTHER" id="PTHR34701:SF1">
    <property type="entry name" value="TRANSCRIPTIONAL REGULATOR MRAZ"/>
    <property type="match status" value="1"/>
</dbReference>
<dbReference type="Pfam" id="PF02381">
    <property type="entry name" value="MraZ"/>
    <property type="match status" value="2"/>
</dbReference>
<dbReference type="SUPFAM" id="SSF89447">
    <property type="entry name" value="AbrB/MazE/MraZ-like"/>
    <property type="match status" value="1"/>
</dbReference>
<dbReference type="PROSITE" id="PS51740">
    <property type="entry name" value="SPOVT_ABRB"/>
    <property type="match status" value="2"/>
</dbReference>
<reference key="1">
    <citation type="journal article" date="2008" name="J. Bacteriol.">
        <title>Genome sequence of Lactobacillus helveticus: an organism distinguished by selective gene loss and IS element expansion.</title>
        <authorList>
            <person name="Callanan M."/>
            <person name="Kaleta P."/>
            <person name="O'Callaghan J."/>
            <person name="O'Sullivan O."/>
            <person name="Jordan K."/>
            <person name="McAuliffe O."/>
            <person name="Sangrador-Vegas A."/>
            <person name="Slattery L."/>
            <person name="Fitzgerald G.F."/>
            <person name="Beresford T."/>
            <person name="Ross R.P."/>
        </authorList>
    </citation>
    <scope>NUCLEOTIDE SEQUENCE [LARGE SCALE GENOMIC DNA]</scope>
    <source>
        <strain>DPC 4571</strain>
    </source>
</reference>
<protein>
    <recommendedName>
        <fullName>Transcriptional regulator MraZ</fullName>
    </recommendedName>
</protein>
<evidence type="ECO:0000255" key="1">
    <source>
        <dbReference type="HAMAP-Rule" id="MF_01008"/>
    </source>
</evidence>
<evidence type="ECO:0000255" key="2">
    <source>
        <dbReference type="PROSITE-ProRule" id="PRU01076"/>
    </source>
</evidence>
<name>MRAZ_LACH4</name>
<comment type="subunit">
    <text evidence="1">Forms oligomers.</text>
</comment>
<comment type="subcellular location">
    <subcellularLocation>
        <location evidence="1">Cytoplasm</location>
        <location evidence="1">Nucleoid</location>
    </subcellularLocation>
</comment>
<comment type="similarity">
    <text evidence="1">Belongs to the MraZ family.</text>
</comment>